<protein>
    <recommendedName>
        <fullName evidence="1">Glycogen synthase</fullName>
        <ecNumber evidence="1">2.4.1.21</ecNumber>
    </recommendedName>
    <alternativeName>
        <fullName evidence="1">Starch [bacterial glycogen] synthase</fullName>
    </alternativeName>
</protein>
<comment type="function">
    <text evidence="1">Synthesizes alpha-1,4-glucan chains using ADP-glucose.</text>
</comment>
<comment type="catalytic activity">
    <reaction evidence="1">
        <text>[(1-&gt;4)-alpha-D-glucosyl](n) + ADP-alpha-D-glucose = [(1-&gt;4)-alpha-D-glucosyl](n+1) + ADP + H(+)</text>
        <dbReference type="Rhea" id="RHEA:18189"/>
        <dbReference type="Rhea" id="RHEA-COMP:9584"/>
        <dbReference type="Rhea" id="RHEA-COMP:9587"/>
        <dbReference type="ChEBI" id="CHEBI:15378"/>
        <dbReference type="ChEBI" id="CHEBI:15444"/>
        <dbReference type="ChEBI" id="CHEBI:57498"/>
        <dbReference type="ChEBI" id="CHEBI:456216"/>
        <dbReference type="EC" id="2.4.1.21"/>
    </reaction>
</comment>
<comment type="pathway">
    <text evidence="1">Glycan biosynthesis; glycogen biosynthesis.</text>
</comment>
<comment type="similarity">
    <text evidence="1">Belongs to the glycosyltransferase 1 family. Bacterial/plant glycogen synthase subfamily.</text>
</comment>
<organism>
    <name type="scientific">Ligilactobacillus salivarius (strain UCC118)</name>
    <name type="common">Lactobacillus salivarius</name>
    <dbReference type="NCBI Taxonomy" id="362948"/>
    <lineage>
        <taxon>Bacteria</taxon>
        <taxon>Bacillati</taxon>
        <taxon>Bacillota</taxon>
        <taxon>Bacilli</taxon>
        <taxon>Lactobacillales</taxon>
        <taxon>Lactobacillaceae</taxon>
        <taxon>Ligilactobacillus</taxon>
    </lineage>
</organism>
<evidence type="ECO:0000255" key="1">
    <source>
        <dbReference type="HAMAP-Rule" id="MF_00484"/>
    </source>
</evidence>
<gene>
    <name evidence="1" type="primary">glgA</name>
    <name type="ordered locus">LSL_1291</name>
</gene>
<sequence length="476" mass="54096">MKLLFAGSECAPFFKTGGLGDVMGALPKTIAKTTDNDVRVVLPFFTGMAEEYKSQLSFVTSFYVKVGWRDQYCGVLKLEMDNVTYYFIDNLYYFDRPGLYGYYDEGERWAFFQQAIIEMLEKIGFIPDILHVNDYHTAFIPFLLKEKYGWINAYQSIKTVLTIHNLQFQGEYGREVLGELFNLDASYYDDGTVRFDTAVNFMKTGILYADKVNTVSPTYASEIQTEAFGQGLDEILRMHNWKLRGILNGIDYERNNPATDKNLVANYSAKKLKGKVKDKLALQKEFGLPQRKDVPVIAMVSRLTAQKGFQLVVSEMQNLVQFDVQVIVLGTGDANFEHDFRYFADTYPDKVGAAITFDVGLAQRIYAGADMFLMPSAFEPCGLSQMISMRYGTLPIVHQIGGLQDSVQPFNPVTGEGTGFGFHDFSGFYMMQEIQEALRLYAESVAWTKVVKQAMSQDFSWETASQEYLNMYNELV</sequence>
<dbReference type="EC" id="2.4.1.21" evidence="1"/>
<dbReference type="EMBL" id="CP000233">
    <property type="protein sequence ID" value="ABE00098.1"/>
    <property type="molecule type" value="Genomic_DNA"/>
</dbReference>
<dbReference type="RefSeq" id="WP_011476257.1">
    <property type="nucleotide sequence ID" value="NC_007929.1"/>
</dbReference>
<dbReference type="RefSeq" id="YP_536181.1">
    <property type="nucleotide sequence ID" value="NC_007929.1"/>
</dbReference>
<dbReference type="SMR" id="Q1WSN1"/>
<dbReference type="STRING" id="362948.LSL_1291"/>
<dbReference type="CAZy" id="GT5">
    <property type="family name" value="Glycosyltransferase Family 5"/>
</dbReference>
<dbReference type="KEGG" id="lsl:LSL_1291"/>
<dbReference type="PATRIC" id="fig|362948.14.peg.1365"/>
<dbReference type="HOGENOM" id="CLU_009583_18_2_9"/>
<dbReference type="OrthoDB" id="9808590at2"/>
<dbReference type="UniPathway" id="UPA00164"/>
<dbReference type="Proteomes" id="UP000006559">
    <property type="component" value="Chromosome"/>
</dbReference>
<dbReference type="GO" id="GO:0009011">
    <property type="term" value="F:alpha-1,4-glucan glucosyltransferase (ADP-glucose donor) activity"/>
    <property type="evidence" value="ECO:0007669"/>
    <property type="project" value="UniProtKB-UniRule"/>
</dbReference>
<dbReference type="GO" id="GO:0004373">
    <property type="term" value="F:alpha-1,4-glucan glucosyltransferase (UDP-glucose donor) activity"/>
    <property type="evidence" value="ECO:0007669"/>
    <property type="project" value="InterPro"/>
</dbReference>
<dbReference type="GO" id="GO:0005978">
    <property type="term" value="P:glycogen biosynthetic process"/>
    <property type="evidence" value="ECO:0007669"/>
    <property type="project" value="UniProtKB-UniRule"/>
</dbReference>
<dbReference type="CDD" id="cd03791">
    <property type="entry name" value="GT5_Glycogen_synthase_DULL1-like"/>
    <property type="match status" value="1"/>
</dbReference>
<dbReference type="Gene3D" id="3.40.50.2000">
    <property type="entry name" value="Glycogen Phosphorylase B"/>
    <property type="match status" value="2"/>
</dbReference>
<dbReference type="HAMAP" id="MF_00484">
    <property type="entry name" value="Glycogen_synth"/>
    <property type="match status" value="1"/>
</dbReference>
<dbReference type="InterPro" id="IPR001296">
    <property type="entry name" value="Glyco_trans_1"/>
</dbReference>
<dbReference type="InterPro" id="IPR011835">
    <property type="entry name" value="GS/SS"/>
</dbReference>
<dbReference type="InterPro" id="IPR013534">
    <property type="entry name" value="Starch_synth_cat_dom"/>
</dbReference>
<dbReference type="NCBIfam" id="TIGR02095">
    <property type="entry name" value="glgA"/>
    <property type="match status" value="1"/>
</dbReference>
<dbReference type="NCBIfam" id="NF001898">
    <property type="entry name" value="PRK00654.1-1"/>
    <property type="match status" value="1"/>
</dbReference>
<dbReference type="PANTHER" id="PTHR45825:SF11">
    <property type="entry name" value="ALPHA AMYLASE DOMAIN-CONTAINING PROTEIN"/>
    <property type="match status" value="1"/>
</dbReference>
<dbReference type="PANTHER" id="PTHR45825">
    <property type="entry name" value="GRANULE-BOUND STARCH SYNTHASE 1, CHLOROPLASTIC/AMYLOPLASTIC"/>
    <property type="match status" value="1"/>
</dbReference>
<dbReference type="Pfam" id="PF08323">
    <property type="entry name" value="Glyco_transf_5"/>
    <property type="match status" value="1"/>
</dbReference>
<dbReference type="Pfam" id="PF00534">
    <property type="entry name" value="Glycos_transf_1"/>
    <property type="match status" value="1"/>
</dbReference>
<dbReference type="SUPFAM" id="SSF53756">
    <property type="entry name" value="UDP-Glycosyltransferase/glycogen phosphorylase"/>
    <property type="match status" value="1"/>
</dbReference>
<reference key="1">
    <citation type="journal article" date="2006" name="Proc. Natl. Acad. Sci. U.S.A.">
        <title>Multireplicon genome architecture of Lactobacillus salivarius.</title>
        <authorList>
            <person name="Claesson M.J."/>
            <person name="Li Y."/>
            <person name="Leahy S."/>
            <person name="Canchaya C."/>
            <person name="van Pijkeren J.P."/>
            <person name="Cerdeno-Tarraga A.M."/>
            <person name="Parkhill J."/>
            <person name="Flynn S."/>
            <person name="O'Sullivan G.C."/>
            <person name="Collins J.K."/>
            <person name="Higgins D."/>
            <person name="Shanahan F."/>
            <person name="Fitzgerald G.F."/>
            <person name="van Sinderen D."/>
            <person name="O'Toole P.W."/>
        </authorList>
    </citation>
    <scope>NUCLEOTIDE SEQUENCE [LARGE SCALE GENOMIC DNA]</scope>
    <source>
        <strain>UCC118</strain>
    </source>
</reference>
<proteinExistence type="inferred from homology"/>
<name>GLGA_LIGS1</name>
<feature type="chain" id="PRO_1000014368" description="Glycogen synthase">
    <location>
        <begin position="1"/>
        <end position="476"/>
    </location>
</feature>
<feature type="binding site" evidence="1">
    <location>
        <position position="15"/>
    </location>
    <ligand>
        <name>ADP-alpha-D-glucose</name>
        <dbReference type="ChEBI" id="CHEBI:57498"/>
    </ligand>
</feature>
<keyword id="KW-0320">Glycogen biosynthesis</keyword>
<keyword id="KW-0328">Glycosyltransferase</keyword>
<keyword id="KW-1185">Reference proteome</keyword>
<keyword id="KW-0808">Transferase</keyword>
<accession>Q1WSN1</accession>